<proteinExistence type="evidence at protein level"/>
<feature type="chain" id="PRO_0000429020" description="Deacetylase Oant_2987">
    <location>
        <begin position="1"/>
        <end position="402"/>
    </location>
</feature>
<feature type="binding site" evidence="1">
    <location>
        <position position="70"/>
    </location>
    <ligand>
        <name>Zn(2+)</name>
        <dbReference type="ChEBI" id="CHEBI:29105"/>
        <label>1</label>
    </ligand>
</feature>
<feature type="binding site" evidence="1">
    <location>
        <position position="72"/>
    </location>
    <ligand>
        <name>Zn(2+)</name>
        <dbReference type="ChEBI" id="CHEBI:29105"/>
        <label>1</label>
    </ligand>
</feature>
<feature type="binding site" description="via carbamate group" evidence="1">
    <location>
        <position position="168"/>
    </location>
    <ligand>
        <name>Zn(2+)</name>
        <dbReference type="ChEBI" id="CHEBI:29105"/>
        <label>1</label>
    </ligand>
</feature>
<feature type="binding site" description="via carbamate group" evidence="1">
    <location>
        <position position="168"/>
    </location>
    <ligand>
        <name>Zn(2+)</name>
        <dbReference type="ChEBI" id="CHEBI:29105"/>
        <label>2</label>
    </ligand>
</feature>
<feature type="binding site" evidence="1">
    <location>
        <position position="201"/>
    </location>
    <ligand>
        <name>Zn(2+)</name>
        <dbReference type="ChEBI" id="CHEBI:29105"/>
        <label>2</label>
    </ligand>
</feature>
<feature type="binding site" evidence="1">
    <location>
        <position position="224"/>
    </location>
    <ligand>
        <name>Zn(2+)</name>
        <dbReference type="ChEBI" id="CHEBI:29105"/>
        <label>2</label>
    </ligand>
</feature>
<feature type="binding site" evidence="1">
    <location>
        <position position="284"/>
    </location>
    <ligand>
        <name>Zn(2+)</name>
        <dbReference type="ChEBI" id="CHEBI:29105"/>
        <label>1</label>
    </ligand>
</feature>
<feature type="site" description="Transition state stabilizer" evidence="1">
    <location>
        <position position="170"/>
    </location>
</feature>
<feature type="modified residue" description="N6-carboxylysine" evidence="1">
    <location>
        <position position="168"/>
    </location>
</feature>
<accession>A6X391</accession>
<name>DEACT_BRUA4</name>
<organism>
    <name type="scientific">Brucella anthropi (strain ATCC 49188 / DSM 6882 / CCUG 24695 / JCM 21032 / LMG 3331 / NBRC 15819 / NCTC 12168 / Alc 37)</name>
    <name type="common">Ochrobactrum anthropi</name>
    <dbReference type="NCBI Taxonomy" id="439375"/>
    <lineage>
        <taxon>Bacteria</taxon>
        <taxon>Pseudomonadati</taxon>
        <taxon>Pseudomonadota</taxon>
        <taxon>Alphaproteobacteria</taxon>
        <taxon>Hyphomicrobiales</taxon>
        <taxon>Brucellaceae</taxon>
        <taxon>Brucella/Ochrobactrum group</taxon>
        <taxon>Brucella</taxon>
    </lineage>
</organism>
<sequence>MISGEQAKPLLITNVKPVAFGVEHSDATTDILVGKDGSISAIGKSLNAPADVERVDGKGAWISPGWVDLHVHIWHGGTDISIRPSECGAERGVTTLVDAGSAGEANFHGFREYIIEPSKERIKAFLNLGSIGLVACNRVPELRDIKDIDLDRILECYAANSEHIVGIKVRASHVITGSWGVTPVKLGKKIAKILKVPMMVHVGEPPALYDEVLEILGPGDVVTHCFNGKSGSSIMEDEDLFNLAERCSGEGIRLDIGHGGASFSFKVAEAAIERGLLPFSISTDLHGHSMNFPVWDLATTMSKLLSVNMPFENVIEAVTHNPASVIKLSMENRLSVGQRADFTIFDLVDADLEATDSNGDVSRLNRLFEPRYAVIGAEAITASRYIPRARKLVRHSHGYSWR</sequence>
<keyword id="KW-0378">Hydrolase</keyword>
<keyword id="KW-0479">Metal-binding</keyword>
<keyword id="KW-1185">Reference proteome</keyword>
<keyword id="KW-0862">Zinc</keyword>
<dbReference type="EC" id="3.1.1.-"/>
<dbReference type="EMBL" id="CP000759">
    <property type="protein sequence ID" value="ABS15695.1"/>
    <property type="molecule type" value="Genomic_DNA"/>
</dbReference>
<dbReference type="RefSeq" id="WP_011982716.1">
    <property type="nucleotide sequence ID" value="NC_009668.1"/>
</dbReference>
<dbReference type="SMR" id="A6X391"/>
<dbReference type="STRING" id="439375.Oant_2987"/>
<dbReference type="KEGG" id="oan:Oant_2987"/>
<dbReference type="PATRIC" id="fig|439375.7.peg.3138"/>
<dbReference type="eggNOG" id="COG3964">
    <property type="taxonomic scope" value="Bacteria"/>
</dbReference>
<dbReference type="HOGENOM" id="CLU_036699_2_0_5"/>
<dbReference type="Proteomes" id="UP000002301">
    <property type="component" value="Chromosome 2"/>
</dbReference>
<dbReference type="GO" id="GO:0052689">
    <property type="term" value="F:carboxylic ester hydrolase activity"/>
    <property type="evidence" value="ECO:0000314"/>
    <property type="project" value="CACAO"/>
</dbReference>
<dbReference type="GO" id="GO:0019213">
    <property type="term" value="F:deacetylase activity"/>
    <property type="evidence" value="ECO:0007669"/>
    <property type="project" value="InterPro"/>
</dbReference>
<dbReference type="GO" id="GO:0016810">
    <property type="term" value="F:hydrolase activity, acting on carbon-nitrogen (but not peptide) bonds"/>
    <property type="evidence" value="ECO:0007669"/>
    <property type="project" value="InterPro"/>
</dbReference>
<dbReference type="GO" id="GO:0046872">
    <property type="term" value="F:metal ion binding"/>
    <property type="evidence" value="ECO:0007669"/>
    <property type="project" value="UniProtKB-KW"/>
</dbReference>
<dbReference type="CDD" id="cd01307">
    <property type="entry name" value="Met_dep_hydrolase_B"/>
    <property type="match status" value="1"/>
</dbReference>
<dbReference type="FunFam" id="3.20.20.140:FF:000051">
    <property type="entry name" value="Dihydroorotase protein"/>
    <property type="match status" value="1"/>
</dbReference>
<dbReference type="Gene3D" id="3.20.20.140">
    <property type="entry name" value="Metal-dependent hydrolases"/>
    <property type="match status" value="1"/>
</dbReference>
<dbReference type="Gene3D" id="2.30.40.10">
    <property type="entry name" value="Urease, subunit C, domain 1"/>
    <property type="match status" value="1"/>
</dbReference>
<dbReference type="InterPro" id="IPR006680">
    <property type="entry name" value="Amidohydro-rel"/>
</dbReference>
<dbReference type="InterPro" id="IPR020043">
    <property type="entry name" value="Deacetylase_Atu3266-like"/>
</dbReference>
<dbReference type="InterPro" id="IPR011059">
    <property type="entry name" value="Metal-dep_hydrolase_composite"/>
</dbReference>
<dbReference type="InterPro" id="IPR032466">
    <property type="entry name" value="Metal_Hydrolase"/>
</dbReference>
<dbReference type="NCBIfam" id="NF006689">
    <property type="entry name" value="PRK09237.1"/>
    <property type="match status" value="1"/>
</dbReference>
<dbReference type="PANTHER" id="PTHR42717">
    <property type="entry name" value="DIHYDROOROTASE-RELATED"/>
    <property type="match status" value="1"/>
</dbReference>
<dbReference type="PANTHER" id="PTHR42717:SF1">
    <property type="entry name" value="IMIDAZOLONEPROPIONASE AND RELATED AMIDOHYDROLASES"/>
    <property type="match status" value="1"/>
</dbReference>
<dbReference type="Pfam" id="PF01979">
    <property type="entry name" value="Amidohydro_1"/>
    <property type="match status" value="1"/>
</dbReference>
<dbReference type="PIRSF" id="PIRSF039004">
    <property type="entry name" value="ADE_EF_0837"/>
    <property type="match status" value="1"/>
</dbReference>
<dbReference type="SUPFAM" id="SSF51338">
    <property type="entry name" value="Composite domain of metallo-dependent hydrolases"/>
    <property type="match status" value="1"/>
</dbReference>
<dbReference type="SUPFAM" id="SSF51556">
    <property type="entry name" value="Metallo-dependent hydrolases"/>
    <property type="match status" value="1"/>
</dbReference>
<reference key="1">
    <citation type="journal article" date="2011" name="J. Bacteriol.">
        <title>Genome of Ochrobactrum anthropi ATCC 49188 T, a versatile opportunistic pathogen and symbiont of several eukaryotic hosts.</title>
        <authorList>
            <person name="Chain P.S."/>
            <person name="Lang D.M."/>
            <person name="Comerci D.J."/>
            <person name="Malfatti S.A."/>
            <person name="Vergez L.M."/>
            <person name="Shin M."/>
            <person name="Ugalde R.A."/>
            <person name="Garcia E."/>
            <person name="Tolmasky M.E."/>
        </authorList>
    </citation>
    <scope>NUCLEOTIDE SEQUENCE [LARGE SCALE GENOMIC DNA]</scope>
    <source>
        <strain>ATCC 49188 / DSM 6882 / CCUG 24695 / JCM 21032 / LMG 3331 / NBRC 15819 / NCTC 12168 / Alc 37</strain>
    </source>
</reference>
<reference key="2">
    <citation type="journal article" date="2013" name="Biochemistry">
        <title>Functional annotation and three-dimensional structure of an incorrectly annotated dihydroorotase from cog3964 in the amidohydrolase superfamily.</title>
        <authorList>
            <person name="Ornelas A."/>
            <person name="Korczynska M."/>
            <person name="Ragumani S."/>
            <person name="Kumaran D."/>
            <person name="Narindoshvili T."/>
            <person name="Shoichet B.K."/>
            <person name="Swaminathan S."/>
            <person name="Raushel F.M."/>
        </authorList>
    </citation>
    <scope>FUNCTION</scope>
    <scope>COFACTOR</scope>
    <scope>BIOPHYSICOCHEMICAL PROPERTIES</scope>
    <scope>LACK OF AMINOHYDROLASE ACTIVITY</scope>
    <source>
        <strain>ATCC 49188 / DSM 6882 / CCUG 24695 / JCM 21032 / LMG 3331 / NBRC 15819 / NCTC 12168 / Alc 37</strain>
    </source>
</reference>
<gene>
    <name type="ordered locus">Oant_2987</name>
</gene>
<comment type="function">
    <text evidence="2">Esterase that catalyzes the deacetylation of acetyl-(R)-mandelate (in vitro). Can also hydrolyze acetyl glycolate, but with lower efficiency. Has very low N-acetyl-D-amino acid deacetylase activity with N-acetyl-D-serine and N-acetyl-D-threonine (in vitro). Theoretical substrate docking studies suggest that other N-acetylated amino acids may optimally occupy the active site and may in fact be the physiological substrates.</text>
</comment>
<comment type="cofactor">
    <cofactor evidence="1 2">
        <name>Zn(2+)</name>
        <dbReference type="ChEBI" id="CHEBI:29105"/>
    </cofactor>
    <text evidence="1 2">Binds 2 zinc ions per subunit. After heterologous expression, a stoichiometry of 1 zinc ion per subunit is observed.</text>
</comment>
<comment type="biophysicochemical properties">
    <kinetics>
        <KM evidence="2">0.7 mM for acetyl-(R)-mandelate</KM>
    </kinetics>
</comment>
<comment type="similarity">
    <text evidence="3">Belongs to the metallo-dependent hydrolases superfamily. Atu3266/EF_0837 deacetylase family.</text>
</comment>
<evidence type="ECO:0000250" key="1"/>
<evidence type="ECO:0000269" key="2">
    <source>
    </source>
</evidence>
<evidence type="ECO:0000305" key="3"/>
<protein>
    <recommendedName>
        <fullName>Deacetylase Oant_2987</fullName>
        <ecNumber>3.1.1.-</ecNumber>
    </recommendedName>
</protein>